<gene>
    <name type="primary">SAL1</name>
</gene>
<sequence>MKLLLLLCLGLTLASSHKEAGQDVVTSNFDASKIAGEWYSILLASDAKENIEENGSMRVFVEHIRVLDNSSLAFKFQRKVNGECTDFYAVCDKVGDGVYTVAYYGENKFRLLEVNYSDYVILHLVNVNGDKTFQLMEFYGRKPDVEPKLKDKFVEICQQYGIIKENIIDLTKIDRCFQLRGSGGVQESSAE</sequence>
<reference key="1">
    <citation type="journal article" date="2000" name="Biochem. J.">
        <title>Cloning, post-translational modifications, heterologous expression and ligand-binding of boar salivary lipocalin.</title>
        <authorList>
            <person name="Loebel D."/>
            <person name="Scaloni A."/>
            <person name="Paolini S."/>
            <person name="Fini C."/>
            <person name="Ferrara L."/>
            <person name="Breer H."/>
            <person name="Pelosi P."/>
        </authorList>
    </citation>
    <scope>NUCLEOTIDE SEQUENCE [MRNA]</scope>
    <scope>VARIANTS</scope>
    <scope>DISULFIDE BOND</scope>
    <scope>GLYCOSYLATION AT ASN-69</scope>
    <source>
        <tissue>Submandibular gland</tissue>
    </source>
</reference>
<reference key="2">
    <citation type="journal article" date="1998" name="Eur. J. Biochem.">
        <title>Lipocalins of boar salivary glands binding odours and pheromones.</title>
        <authorList>
            <person name="Marchese S."/>
            <person name="Pes D."/>
            <person name="Scaloni A."/>
            <person name="Carbone V."/>
            <person name="Pelosi P."/>
        </authorList>
    </citation>
    <scope>PROTEIN SEQUENCE OF 17-45</scope>
    <source>
        <tissue>Submandibular gland</tissue>
    </source>
</reference>
<reference key="3">
    <citation type="journal article" date="2002" name="Eur. J. Biochem.">
        <title>Boar salivary lipocalin. Three-dimensional X-ray structure and androsterol/androstenone docking simulations.</title>
        <authorList>
            <person name="Spinelli S."/>
            <person name="Vincent F."/>
            <person name="Pelosi P."/>
            <person name="Tegoni M."/>
            <person name="Cambillau C."/>
        </authorList>
    </citation>
    <scope>X-RAY CRYSTALLOGRAPHY (2.13 ANGSTROMS) OF 17-191</scope>
    <scope>GLYCOSYLATION AT ASN-69</scope>
    <scope>DISULFIDE BONDS</scope>
</reference>
<protein>
    <recommendedName>
        <fullName>Salivary lipocalin</fullName>
        <shortName>SAL</shortName>
    </recommendedName>
</protein>
<feature type="signal peptide" evidence="3">
    <location>
        <begin position="1"/>
        <end position="16"/>
    </location>
</feature>
<feature type="chain" id="PRO_0000017973" description="Salivary lipocalin">
    <location>
        <begin position="17"/>
        <end position="191"/>
    </location>
</feature>
<feature type="glycosylation site" description="N-linked (GlcNAc...) asparagine" evidence="1 2">
    <location>
        <position position="69"/>
    </location>
</feature>
<feature type="disulfide bond" evidence="1 2">
    <location>
        <begin position="84"/>
        <end position="176"/>
    </location>
</feature>
<feature type="sequence variant" description="In isoform B.">
    <original>V</original>
    <variation>A</variation>
    <location>
        <position position="61"/>
    </location>
</feature>
<feature type="sequence variant" description="In isoform B.">
    <original>I</original>
    <variation>V</variation>
    <location>
        <position position="64"/>
    </location>
</feature>
<feature type="sequence variant" description="In isoform B.">
    <original>A</original>
    <variation>V</variation>
    <location>
        <position position="89"/>
    </location>
</feature>
<feature type="turn" evidence="5">
    <location>
        <begin position="32"/>
        <end position="34"/>
    </location>
</feature>
<feature type="strand" evidence="5">
    <location>
        <begin position="39"/>
        <end position="45"/>
    </location>
</feature>
<feature type="helix" evidence="5">
    <location>
        <begin position="48"/>
        <end position="51"/>
    </location>
</feature>
<feature type="strand" evidence="5">
    <location>
        <begin position="60"/>
        <end position="66"/>
    </location>
</feature>
<feature type="strand" evidence="5">
    <location>
        <begin position="72"/>
        <end position="80"/>
    </location>
</feature>
<feature type="strand" evidence="5">
    <location>
        <begin position="83"/>
        <end position="95"/>
    </location>
</feature>
<feature type="strand" evidence="5">
    <location>
        <begin position="98"/>
        <end position="115"/>
    </location>
</feature>
<feature type="turn" evidence="5">
    <location>
        <begin position="116"/>
        <end position="118"/>
    </location>
</feature>
<feature type="strand" evidence="5">
    <location>
        <begin position="119"/>
        <end position="128"/>
    </location>
</feature>
<feature type="strand" evidence="5">
    <location>
        <begin position="131"/>
        <end position="143"/>
    </location>
</feature>
<feature type="helix" evidence="5">
    <location>
        <begin position="147"/>
        <end position="158"/>
    </location>
</feature>
<feature type="turn" evidence="5">
    <location>
        <begin position="159"/>
        <end position="161"/>
    </location>
</feature>
<feature type="helix" evidence="5">
    <location>
        <begin position="164"/>
        <end position="166"/>
    </location>
</feature>
<feature type="strand" evidence="5">
    <location>
        <begin position="167"/>
        <end position="169"/>
    </location>
</feature>
<feature type="helix" evidence="5">
    <location>
        <begin position="170"/>
        <end position="172"/>
    </location>
</feature>
<feature type="helix" evidence="5">
    <location>
        <begin position="177"/>
        <end position="179"/>
    </location>
</feature>
<keyword id="KW-0002">3D-structure</keyword>
<keyword id="KW-0903">Direct protein sequencing</keyword>
<keyword id="KW-1015">Disulfide bond</keyword>
<keyword id="KW-0325">Glycoprotein</keyword>
<keyword id="KW-1185">Reference proteome</keyword>
<keyword id="KW-0964">Secreted</keyword>
<keyword id="KW-0732">Signal</keyword>
<keyword id="KW-0813">Transport</keyword>
<name>SAL_PIG</name>
<proteinExistence type="evidence at protein level"/>
<comment type="function">
    <text>Binds pheromones, the pheromones are released from the saliva of males and affect the sexual behavior of females.</text>
</comment>
<comment type="subunit">
    <text>Homodimer.</text>
</comment>
<comment type="subcellular location">
    <subcellularLocation>
        <location>Secreted</location>
    </subcellularLocation>
</comment>
<comment type="tissue specificity">
    <text>In the submaxillary salivary glands of mature male pigs, but absent from that of females. Expression was much lower in submaxillary glands of castrated male pigs than in sexually mature individuals.</text>
</comment>
<comment type="polymorphism">
    <text>Two isoforms have been identified which differ by 3 residues.</text>
</comment>
<comment type="similarity">
    <text evidence="4">Belongs to the calycin superfamily. Lipocalin family.</text>
</comment>
<organism>
    <name type="scientific">Sus scrofa</name>
    <name type="common">Pig</name>
    <dbReference type="NCBI Taxonomy" id="9823"/>
    <lineage>
        <taxon>Eukaryota</taxon>
        <taxon>Metazoa</taxon>
        <taxon>Chordata</taxon>
        <taxon>Craniata</taxon>
        <taxon>Vertebrata</taxon>
        <taxon>Euteleostomi</taxon>
        <taxon>Mammalia</taxon>
        <taxon>Eutheria</taxon>
        <taxon>Laurasiatheria</taxon>
        <taxon>Artiodactyla</taxon>
        <taxon>Suina</taxon>
        <taxon>Suidae</taxon>
        <taxon>Sus</taxon>
    </lineage>
</organism>
<evidence type="ECO:0000269" key="1">
    <source>
    </source>
</evidence>
<evidence type="ECO:0000269" key="2">
    <source>
    </source>
</evidence>
<evidence type="ECO:0000269" key="3">
    <source>
    </source>
</evidence>
<evidence type="ECO:0000305" key="4"/>
<evidence type="ECO:0007829" key="5">
    <source>
        <dbReference type="PDB" id="1GM6"/>
    </source>
</evidence>
<dbReference type="EMBL" id="AJ249974">
    <property type="protein sequence ID" value="CAB93679.1"/>
    <property type="molecule type" value="mRNA"/>
</dbReference>
<dbReference type="RefSeq" id="NP_998979.1">
    <property type="nucleotide sequence ID" value="NM_213814.2"/>
</dbReference>
<dbReference type="PDB" id="1GM6">
    <property type="method" value="X-ray"/>
    <property type="resolution" value="2.13 A"/>
    <property type="chains" value="A=17-191"/>
</dbReference>
<dbReference type="PDBsum" id="1GM6"/>
<dbReference type="SMR" id="P81608"/>
<dbReference type="FunCoup" id="P81608">
    <property type="interactions" value="5"/>
</dbReference>
<dbReference type="STRING" id="9823.ENSSSCP00000005870"/>
<dbReference type="GlyCosmos" id="P81608">
    <property type="glycosylation" value="1 site, No reported glycans"/>
</dbReference>
<dbReference type="GlyGen" id="P81608">
    <property type="glycosylation" value="1 site"/>
</dbReference>
<dbReference type="iPTMnet" id="P81608"/>
<dbReference type="PaxDb" id="9823-ENSSSCP00000005870"/>
<dbReference type="Ensembl" id="ENSSSCT00025084270.1">
    <property type="protein sequence ID" value="ENSSSCP00025036665.1"/>
    <property type="gene ID" value="ENSSSCG00025061424.1"/>
</dbReference>
<dbReference type="Ensembl" id="ENSSSCT00115028161">
    <property type="protein sequence ID" value="ENSSSCP00115026704"/>
    <property type="gene ID" value="ENSSSCG00115016116"/>
</dbReference>
<dbReference type="GeneID" id="396739"/>
<dbReference type="KEGG" id="ssc:396739"/>
<dbReference type="CTD" id="396739"/>
<dbReference type="eggNOG" id="ENOG502SWRK">
    <property type="taxonomic scope" value="Eukaryota"/>
</dbReference>
<dbReference type="InParanoid" id="P81608"/>
<dbReference type="OrthoDB" id="9048943at2759"/>
<dbReference type="EvolutionaryTrace" id="P81608"/>
<dbReference type="Proteomes" id="UP000008227">
    <property type="component" value="Unplaced"/>
</dbReference>
<dbReference type="Proteomes" id="UP000314985">
    <property type="component" value="Unplaced"/>
</dbReference>
<dbReference type="Proteomes" id="UP000694570">
    <property type="component" value="Unplaced"/>
</dbReference>
<dbReference type="Proteomes" id="UP000694571">
    <property type="component" value="Unplaced"/>
</dbReference>
<dbReference type="Proteomes" id="UP000694720">
    <property type="component" value="Unplaced"/>
</dbReference>
<dbReference type="Proteomes" id="UP000694722">
    <property type="component" value="Unplaced"/>
</dbReference>
<dbReference type="Proteomes" id="UP000694723">
    <property type="component" value="Unplaced"/>
</dbReference>
<dbReference type="Proteomes" id="UP000694724">
    <property type="component" value="Unplaced"/>
</dbReference>
<dbReference type="Proteomes" id="UP000694725">
    <property type="component" value="Unplaced"/>
</dbReference>
<dbReference type="Proteomes" id="UP000694726">
    <property type="component" value="Unplaced"/>
</dbReference>
<dbReference type="Proteomes" id="UP000694727">
    <property type="component" value="Unplaced"/>
</dbReference>
<dbReference type="Proteomes" id="UP000694728">
    <property type="component" value="Unplaced"/>
</dbReference>
<dbReference type="GO" id="GO:0005615">
    <property type="term" value="C:extracellular space"/>
    <property type="evidence" value="ECO:0000318"/>
    <property type="project" value="GO_Central"/>
</dbReference>
<dbReference type="GO" id="GO:0005549">
    <property type="term" value="F:odorant binding"/>
    <property type="evidence" value="ECO:0000318"/>
    <property type="project" value="GO_Central"/>
</dbReference>
<dbReference type="GO" id="GO:0036094">
    <property type="term" value="F:small molecule binding"/>
    <property type="evidence" value="ECO:0007669"/>
    <property type="project" value="InterPro"/>
</dbReference>
<dbReference type="CDD" id="cd19428">
    <property type="entry name" value="lipocalin_MUP-like"/>
    <property type="match status" value="1"/>
</dbReference>
<dbReference type="FunFam" id="2.40.128.20:FF:000008">
    <property type="entry name" value="Major urinary protein"/>
    <property type="match status" value="1"/>
</dbReference>
<dbReference type="Gene3D" id="2.40.128.20">
    <property type="match status" value="1"/>
</dbReference>
<dbReference type="InterPro" id="IPR012674">
    <property type="entry name" value="Calycin"/>
</dbReference>
<dbReference type="InterPro" id="IPR002345">
    <property type="entry name" value="Lipocalin"/>
</dbReference>
<dbReference type="InterPro" id="IPR022272">
    <property type="entry name" value="Lipocalin_CS"/>
</dbReference>
<dbReference type="InterPro" id="IPR000566">
    <property type="entry name" value="Lipocln_cytosolic_FA-bd_dom"/>
</dbReference>
<dbReference type="InterPro" id="IPR002971">
    <property type="entry name" value="Maj_urinary"/>
</dbReference>
<dbReference type="PANTHER" id="PTHR11430">
    <property type="entry name" value="LIPOCALIN"/>
    <property type="match status" value="1"/>
</dbReference>
<dbReference type="PANTHER" id="PTHR11430:SF76">
    <property type="entry name" value="MAJOR URINARY PROTEIN 1-RELATED"/>
    <property type="match status" value="1"/>
</dbReference>
<dbReference type="Pfam" id="PF00061">
    <property type="entry name" value="Lipocalin"/>
    <property type="match status" value="1"/>
</dbReference>
<dbReference type="PRINTS" id="PR00179">
    <property type="entry name" value="LIPOCALIN"/>
</dbReference>
<dbReference type="PRINTS" id="PR01221">
    <property type="entry name" value="MAJORURINARY"/>
</dbReference>
<dbReference type="SUPFAM" id="SSF50814">
    <property type="entry name" value="Lipocalins"/>
    <property type="match status" value="1"/>
</dbReference>
<dbReference type="PROSITE" id="PS00213">
    <property type="entry name" value="LIPOCALIN"/>
    <property type="match status" value="1"/>
</dbReference>
<accession>P81608</accession>
<accession>Q9N0K0</accession>